<keyword id="KW-0963">Cytoplasm</keyword>
<keyword id="KW-0324">Glycolysis</keyword>
<keyword id="KW-0456">Lyase</keyword>
<keyword id="KW-0460">Magnesium</keyword>
<keyword id="KW-0479">Metal-binding</keyword>
<keyword id="KW-0964">Secreted</keyword>
<accession>Q48UF7</accession>
<proteinExistence type="inferred from homology"/>
<reference key="1">
    <citation type="journal article" date="2005" name="J. Infect. Dis.">
        <title>Genome sequence of a serotype M28 strain of group A Streptococcus: potential new insights into puerperal sepsis and bacterial disease specificity.</title>
        <authorList>
            <person name="Green N.M."/>
            <person name="Zhang S."/>
            <person name="Porcella S.F."/>
            <person name="Nagiec M.J."/>
            <person name="Barbian K.D."/>
            <person name="Beres S.B."/>
            <person name="Lefebvre R.B."/>
            <person name="Musser J.M."/>
        </authorList>
    </citation>
    <scope>NUCLEOTIDE SEQUENCE [LARGE SCALE GENOMIC DNA]</scope>
    <source>
        <strain>MGAS6180</strain>
    </source>
</reference>
<sequence length="435" mass="47356">MSIITDVYAREVLDSRGNPTLEVEVYTESGAFGRGMVPSGASTGEHEAVELRDGDKSRYLGLGTQKAVDNVNNIIAEAIIGYDVRDQQAIDRAMIALDGTPNKGKLGANAILGVSIAVARAAADYLEVPLYTYLGGFNTKVLPTPMMNIINGGSHSDAPIAFQEFMIMPVGAPTFKEGLRWGAEVFHALKKILKERGLVTAVGDEGGFAPKFEGTEDGVETILKAIEAAGYEAGENGIMIGFDCASSEFYDKERKVYDYTKFEGEGAAVRTSAEQVDYLEELVNKYPIITIEDGMDENDWDGWKVLTERLGKRVQLVGDDFFVTNTEYLARGIKENAANSILIKVNQIGTLTETFEAIEMAKEAGYTAVVSHRSGETEDSTIADIAVATNAGQIKTGSLSRTDRIAKYNQLLRIEDQLGEVAQYKGIKSFYNLKK</sequence>
<comment type="function">
    <text evidence="1">Catalyzes the reversible conversion of 2-phosphoglycerate (2-PG) into phosphoenolpyruvate (PEP). It is essential for the degradation of carbohydrates via glycolysis.</text>
</comment>
<comment type="catalytic activity">
    <reaction evidence="1">
        <text>(2R)-2-phosphoglycerate = phosphoenolpyruvate + H2O</text>
        <dbReference type="Rhea" id="RHEA:10164"/>
        <dbReference type="ChEBI" id="CHEBI:15377"/>
        <dbReference type="ChEBI" id="CHEBI:58289"/>
        <dbReference type="ChEBI" id="CHEBI:58702"/>
        <dbReference type="EC" id="4.2.1.11"/>
    </reaction>
</comment>
<comment type="cofactor">
    <cofactor evidence="1">
        <name>Mg(2+)</name>
        <dbReference type="ChEBI" id="CHEBI:18420"/>
    </cofactor>
    <text evidence="1">Binds a second Mg(2+) ion via substrate during catalysis.</text>
</comment>
<comment type="pathway">
    <text evidence="1">Carbohydrate degradation; glycolysis; pyruvate from D-glyceraldehyde 3-phosphate: step 4/5.</text>
</comment>
<comment type="subcellular location">
    <subcellularLocation>
        <location evidence="1">Cytoplasm</location>
    </subcellularLocation>
    <subcellularLocation>
        <location evidence="1">Secreted</location>
    </subcellularLocation>
    <subcellularLocation>
        <location evidence="1">Cell surface</location>
    </subcellularLocation>
    <text evidence="1">Fractions of enolase are present in both the cytoplasm and on the cell surface.</text>
</comment>
<comment type="similarity">
    <text evidence="1">Belongs to the enolase family.</text>
</comment>
<dbReference type="EC" id="4.2.1.11" evidence="1"/>
<dbReference type="EMBL" id="CP000056">
    <property type="protein sequence ID" value="AAX71649.1"/>
    <property type="molecule type" value="Genomic_DNA"/>
</dbReference>
<dbReference type="RefSeq" id="WP_002985288.1">
    <property type="nucleotide sequence ID" value="NC_007296.2"/>
</dbReference>
<dbReference type="SMR" id="Q48UF7"/>
<dbReference type="IntAct" id="Q48UF7">
    <property type="interactions" value="2"/>
</dbReference>
<dbReference type="GeneID" id="69901134"/>
<dbReference type="KEGG" id="spb:M28_Spy0535"/>
<dbReference type="HOGENOM" id="CLU_031223_2_1_9"/>
<dbReference type="UniPathway" id="UPA00109">
    <property type="reaction ID" value="UER00187"/>
</dbReference>
<dbReference type="GO" id="GO:0009986">
    <property type="term" value="C:cell surface"/>
    <property type="evidence" value="ECO:0007669"/>
    <property type="project" value="UniProtKB-SubCell"/>
</dbReference>
<dbReference type="GO" id="GO:0005576">
    <property type="term" value="C:extracellular region"/>
    <property type="evidence" value="ECO:0007669"/>
    <property type="project" value="UniProtKB-SubCell"/>
</dbReference>
<dbReference type="GO" id="GO:0009274">
    <property type="term" value="C:peptidoglycan-based cell wall"/>
    <property type="evidence" value="ECO:0007669"/>
    <property type="project" value="UniProtKB-ARBA"/>
</dbReference>
<dbReference type="GO" id="GO:0000015">
    <property type="term" value="C:phosphopyruvate hydratase complex"/>
    <property type="evidence" value="ECO:0007669"/>
    <property type="project" value="InterPro"/>
</dbReference>
<dbReference type="GO" id="GO:0000287">
    <property type="term" value="F:magnesium ion binding"/>
    <property type="evidence" value="ECO:0007669"/>
    <property type="project" value="UniProtKB-UniRule"/>
</dbReference>
<dbReference type="GO" id="GO:0004634">
    <property type="term" value="F:phosphopyruvate hydratase activity"/>
    <property type="evidence" value="ECO:0007669"/>
    <property type="project" value="UniProtKB-UniRule"/>
</dbReference>
<dbReference type="GO" id="GO:0006096">
    <property type="term" value="P:glycolytic process"/>
    <property type="evidence" value="ECO:0007669"/>
    <property type="project" value="UniProtKB-UniRule"/>
</dbReference>
<dbReference type="CDD" id="cd03313">
    <property type="entry name" value="enolase"/>
    <property type="match status" value="1"/>
</dbReference>
<dbReference type="FunFam" id="3.20.20.120:FF:000001">
    <property type="entry name" value="Enolase"/>
    <property type="match status" value="1"/>
</dbReference>
<dbReference type="FunFam" id="3.30.390.10:FF:000001">
    <property type="entry name" value="Enolase"/>
    <property type="match status" value="1"/>
</dbReference>
<dbReference type="Gene3D" id="3.20.20.120">
    <property type="entry name" value="Enolase-like C-terminal domain"/>
    <property type="match status" value="1"/>
</dbReference>
<dbReference type="Gene3D" id="3.30.390.10">
    <property type="entry name" value="Enolase-like, N-terminal domain"/>
    <property type="match status" value="1"/>
</dbReference>
<dbReference type="HAMAP" id="MF_00318">
    <property type="entry name" value="Enolase"/>
    <property type="match status" value="1"/>
</dbReference>
<dbReference type="InterPro" id="IPR000941">
    <property type="entry name" value="Enolase"/>
</dbReference>
<dbReference type="InterPro" id="IPR036849">
    <property type="entry name" value="Enolase-like_C_sf"/>
</dbReference>
<dbReference type="InterPro" id="IPR029017">
    <property type="entry name" value="Enolase-like_N"/>
</dbReference>
<dbReference type="InterPro" id="IPR020810">
    <property type="entry name" value="Enolase_C"/>
</dbReference>
<dbReference type="InterPro" id="IPR020809">
    <property type="entry name" value="Enolase_CS"/>
</dbReference>
<dbReference type="InterPro" id="IPR020811">
    <property type="entry name" value="Enolase_N"/>
</dbReference>
<dbReference type="NCBIfam" id="TIGR01060">
    <property type="entry name" value="eno"/>
    <property type="match status" value="1"/>
</dbReference>
<dbReference type="PANTHER" id="PTHR11902">
    <property type="entry name" value="ENOLASE"/>
    <property type="match status" value="1"/>
</dbReference>
<dbReference type="PANTHER" id="PTHR11902:SF1">
    <property type="entry name" value="ENOLASE"/>
    <property type="match status" value="1"/>
</dbReference>
<dbReference type="Pfam" id="PF00113">
    <property type="entry name" value="Enolase_C"/>
    <property type="match status" value="1"/>
</dbReference>
<dbReference type="Pfam" id="PF03952">
    <property type="entry name" value="Enolase_N"/>
    <property type="match status" value="1"/>
</dbReference>
<dbReference type="PIRSF" id="PIRSF001400">
    <property type="entry name" value="Enolase"/>
    <property type="match status" value="1"/>
</dbReference>
<dbReference type="PRINTS" id="PR00148">
    <property type="entry name" value="ENOLASE"/>
</dbReference>
<dbReference type="SFLD" id="SFLDS00001">
    <property type="entry name" value="Enolase"/>
    <property type="match status" value="1"/>
</dbReference>
<dbReference type="SFLD" id="SFLDF00002">
    <property type="entry name" value="enolase"/>
    <property type="match status" value="1"/>
</dbReference>
<dbReference type="SMART" id="SM01192">
    <property type="entry name" value="Enolase_C"/>
    <property type="match status" value="1"/>
</dbReference>
<dbReference type="SMART" id="SM01193">
    <property type="entry name" value="Enolase_N"/>
    <property type="match status" value="1"/>
</dbReference>
<dbReference type="SUPFAM" id="SSF51604">
    <property type="entry name" value="Enolase C-terminal domain-like"/>
    <property type="match status" value="1"/>
</dbReference>
<dbReference type="SUPFAM" id="SSF54826">
    <property type="entry name" value="Enolase N-terminal domain-like"/>
    <property type="match status" value="1"/>
</dbReference>
<dbReference type="PROSITE" id="PS00164">
    <property type="entry name" value="ENOLASE"/>
    <property type="match status" value="1"/>
</dbReference>
<gene>
    <name evidence="1" type="primary">eno</name>
    <name type="ordered locus">M28_Spy0535</name>
</gene>
<organism>
    <name type="scientific">Streptococcus pyogenes serotype M28 (strain MGAS6180)</name>
    <dbReference type="NCBI Taxonomy" id="319701"/>
    <lineage>
        <taxon>Bacteria</taxon>
        <taxon>Bacillati</taxon>
        <taxon>Bacillota</taxon>
        <taxon>Bacilli</taxon>
        <taxon>Lactobacillales</taxon>
        <taxon>Streptococcaceae</taxon>
        <taxon>Streptococcus</taxon>
    </lineage>
</organism>
<name>ENO_STRPM</name>
<evidence type="ECO:0000255" key="1">
    <source>
        <dbReference type="HAMAP-Rule" id="MF_00318"/>
    </source>
</evidence>
<protein>
    <recommendedName>
        <fullName evidence="1">Enolase</fullName>
        <ecNumber evidence="1">4.2.1.11</ecNumber>
    </recommendedName>
    <alternativeName>
        <fullName evidence="1">2-phospho-D-glycerate hydro-lyase</fullName>
    </alternativeName>
    <alternativeName>
        <fullName evidence="1">2-phosphoglycerate dehydratase</fullName>
    </alternativeName>
</protein>
<feature type="chain" id="PRO_0000267119" description="Enolase">
    <location>
        <begin position="1"/>
        <end position="435"/>
    </location>
</feature>
<feature type="active site" description="Proton donor" evidence="1">
    <location>
        <position position="205"/>
    </location>
</feature>
<feature type="active site" description="Proton acceptor" evidence="1">
    <location>
        <position position="344"/>
    </location>
</feature>
<feature type="binding site" evidence="1">
    <location>
        <position position="163"/>
    </location>
    <ligand>
        <name>(2R)-2-phosphoglycerate</name>
        <dbReference type="ChEBI" id="CHEBI:58289"/>
    </ligand>
</feature>
<feature type="binding site" evidence="1">
    <location>
        <position position="243"/>
    </location>
    <ligand>
        <name>Mg(2+)</name>
        <dbReference type="ChEBI" id="CHEBI:18420"/>
    </ligand>
</feature>
<feature type="binding site" evidence="1">
    <location>
        <position position="292"/>
    </location>
    <ligand>
        <name>Mg(2+)</name>
        <dbReference type="ChEBI" id="CHEBI:18420"/>
    </ligand>
</feature>
<feature type="binding site" evidence="1">
    <location>
        <position position="319"/>
    </location>
    <ligand>
        <name>Mg(2+)</name>
        <dbReference type="ChEBI" id="CHEBI:18420"/>
    </ligand>
</feature>
<feature type="binding site" evidence="1">
    <location>
        <position position="344"/>
    </location>
    <ligand>
        <name>(2R)-2-phosphoglycerate</name>
        <dbReference type="ChEBI" id="CHEBI:58289"/>
    </ligand>
</feature>
<feature type="binding site" evidence="1">
    <location>
        <position position="373"/>
    </location>
    <ligand>
        <name>(2R)-2-phosphoglycerate</name>
        <dbReference type="ChEBI" id="CHEBI:58289"/>
    </ligand>
</feature>
<feature type="binding site" evidence="1">
    <location>
        <position position="374"/>
    </location>
    <ligand>
        <name>(2R)-2-phosphoglycerate</name>
        <dbReference type="ChEBI" id="CHEBI:58289"/>
    </ligand>
</feature>
<feature type="binding site" evidence="1">
    <location>
        <position position="395"/>
    </location>
    <ligand>
        <name>(2R)-2-phosphoglycerate</name>
        <dbReference type="ChEBI" id="CHEBI:58289"/>
    </ligand>
</feature>